<name>SSUB2_PSEU2</name>
<gene>
    <name evidence="1" type="primary">ssuB2</name>
    <name type="ordered locus">Psyr_3597</name>
</gene>
<comment type="function">
    <text evidence="1">Part of the ABC transporter complex SsuABC involved in aliphatic sulfonates import. Responsible for energy coupling to the transport system.</text>
</comment>
<comment type="catalytic activity">
    <reaction evidence="1">
        <text>ATP + H2O + aliphatic sulfonate-[sulfonate-binding protein]Side 1 = ADP + phosphate + aliphatic sulfonateSide 2 + [sulfonate-binding protein]Side 1.</text>
        <dbReference type="EC" id="7.6.2.14"/>
    </reaction>
</comment>
<comment type="subunit">
    <text evidence="1">The complex is composed of two ATP-binding proteins (SsuB), two transmembrane proteins (SsuC) and a solute-binding protein (SsuA).</text>
</comment>
<comment type="subcellular location">
    <subcellularLocation>
        <location evidence="1">Cell inner membrane</location>
        <topology evidence="1">Peripheral membrane protein</topology>
    </subcellularLocation>
</comment>
<comment type="similarity">
    <text evidence="1">Belongs to the ABC transporter superfamily. Aliphatic sulfonates importer (TC 3.A.1.17.2) family.</text>
</comment>
<accession>Q4ZQE3</accession>
<evidence type="ECO:0000255" key="1">
    <source>
        <dbReference type="HAMAP-Rule" id="MF_01724"/>
    </source>
</evidence>
<feature type="chain" id="PRO_0000279941" description="Aliphatic sulfonates import ATP-binding protein SsuB 2">
    <location>
        <begin position="1"/>
        <end position="274"/>
    </location>
</feature>
<feature type="domain" description="ABC transporter" evidence="1">
    <location>
        <begin position="21"/>
        <end position="235"/>
    </location>
</feature>
<feature type="binding site" evidence="1">
    <location>
        <begin position="53"/>
        <end position="60"/>
    </location>
    <ligand>
        <name>ATP</name>
        <dbReference type="ChEBI" id="CHEBI:30616"/>
    </ligand>
</feature>
<keyword id="KW-0067">ATP-binding</keyword>
<keyword id="KW-0997">Cell inner membrane</keyword>
<keyword id="KW-1003">Cell membrane</keyword>
<keyword id="KW-0472">Membrane</keyword>
<keyword id="KW-0547">Nucleotide-binding</keyword>
<keyword id="KW-1278">Translocase</keyword>
<keyword id="KW-0813">Transport</keyword>
<protein>
    <recommendedName>
        <fullName evidence="1">Aliphatic sulfonates import ATP-binding protein SsuB 2</fullName>
        <ecNumber evidence="1">7.6.2.14</ecNumber>
    </recommendedName>
</protein>
<sequence>MATPDLRNTPSVSPEAGQAPVQLRNVVRQFGRQRVIDGLNLDIAPGEFVALLGASGSGKTTLLRTLAGLDEIDSGELRVPVARAAVFQEPRLMPWKSAWKNVVLGLRINDAKARAEAALTEVGLAHRLNAFPATLSGGEAQRVALARGLVREPKLLLLDEPFAALDALTRIRMHQLIIDLWRKHTPAVLLVTHDVDEAILLADRVIVLADGRIADGIRVDLPRQRDSGQAGFQLIRSRLLGLLGVKVHAAVDSAPQAPEQDVTLSALRRFANAR</sequence>
<dbReference type="EC" id="7.6.2.14" evidence="1"/>
<dbReference type="EMBL" id="CP000075">
    <property type="protein sequence ID" value="AAY38629.1"/>
    <property type="molecule type" value="Genomic_DNA"/>
</dbReference>
<dbReference type="RefSeq" id="WP_011268530.1">
    <property type="nucleotide sequence ID" value="NC_007005.1"/>
</dbReference>
<dbReference type="RefSeq" id="YP_236667.1">
    <property type="nucleotide sequence ID" value="NC_007005.1"/>
</dbReference>
<dbReference type="SMR" id="Q4ZQE3"/>
<dbReference type="STRING" id="205918.Psyr_3597"/>
<dbReference type="KEGG" id="psb:Psyr_3597"/>
<dbReference type="PATRIC" id="fig|205918.7.peg.3692"/>
<dbReference type="eggNOG" id="COG1116">
    <property type="taxonomic scope" value="Bacteria"/>
</dbReference>
<dbReference type="HOGENOM" id="CLU_000604_1_22_6"/>
<dbReference type="OrthoDB" id="9802264at2"/>
<dbReference type="Proteomes" id="UP000000426">
    <property type="component" value="Chromosome"/>
</dbReference>
<dbReference type="GO" id="GO:0005886">
    <property type="term" value="C:plasma membrane"/>
    <property type="evidence" value="ECO:0007669"/>
    <property type="project" value="UniProtKB-SubCell"/>
</dbReference>
<dbReference type="GO" id="GO:0005524">
    <property type="term" value="F:ATP binding"/>
    <property type="evidence" value="ECO:0007669"/>
    <property type="project" value="UniProtKB-KW"/>
</dbReference>
<dbReference type="GO" id="GO:0016887">
    <property type="term" value="F:ATP hydrolysis activity"/>
    <property type="evidence" value="ECO:0007669"/>
    <property type="project" value="InterPro"/>
</dbReference>
<dbReference type="Gene3D" id="3.40.50.300">
    <property type="entry name" value="P-loop containing nucleotide triphosphate hydrolases"/>
    <property type="match status" value="1"/>
</dbReference>
<dbReference type="InterPro" id="IPR003593">
    <property type="entry name" value="AAA+_ATPase"/>
</dbReference>
<dbReference type="InterPro" id="IPR003439">
    <property type="entry name" value="ABC_transporter-like_ATP-bd"/>
</dbReference>
<dbReference type="InterPro" id="IPR017871">
    <property type="entry name" value="ABC_transporter-like_CS"/>
</dbReference>
<dbReference type="InterPro" id="IPR050166">
    <property type="entry name" value="ABC_transporter_ATP-bind"/>
</dbReference>
<dbReference type="InterPro" id="IPR027417">
    <property type="entry name" value="P-loop_NTPase"/>
</dbReference>
<dbReference type="PANTHER" id="PTHR42788:SF17">
    <property type="entry name" value="ALIPHATIC SULFONATES IMPORT ATP-BINDING PROTEIN SSUB"/>
    <property type="match status" value="1"/>
</dbReference>
<dbReference type="PANTHER" id="PTHR42788">
    <property type="entry name" value="TAURINE IMPORT ATP-BINDING PROTEIN-RELATED"/>
    <property type="match status" value="1"/>
</dbReference>
<dbReference type="Pfam" id="PF00005">
    <property type="entry name" value="ABC_tran"/>
    <property type="match status" value="1"/>
</dbReference>
<dbReference type="SMART" id="SM00382">
    <property type="entry name" value="AAA"/>
    <property type="match status" value="1"/>
</dbReference>
<dbReference type="SUPFAM" id="SSF52540">
    <property type="entry name" value="P-loop containing nucleoside triphosphate hydrolases"/>
    <property type="match status" value="1"/>
</dbReference>
<dbReference type="PROSITE" id="PS00211">
    <property type="entry name" value="ABC_TRANSPORTER_1"/>
    <property type="match status" value="1"/>
</dbReference>
<dbReference type="PROSITE" id="PS50893">
    <property type="entry name" value="ABC_TRANSPORTER_2"/>
    <property type="match status" value="1"/>
</dbReference>
<dbReference type="PROSITE" id="PS51291">
    <property type="entry name" value="SSUB"/>
    <property type="match status" value="1"/>
</dbReference>
<reference key="1">
    <citation type="journal article" date="2005" name="Proc. Natl. Acad. Sci. U.S.A.">
        <title>Comparison of the complete genome sequences of Pseudomonas syringae pv. syringae B728a and pv. tomato DC3000.</title>
        <authorList>
            <person name="Feil H."/>
            <person name="Feil W.S."/>
            <person name="Chain P."/>
            <person name="Larimer F."/>
            <person name="Dibartolo G."/>
            <person name="Copeland A."/>
            <person name="Lykidis A."/>
            <person name="Trong S."/>
            <person name="Nolan M."/>
            <person name="Goltsman E."/>
            <person name="Thiel J."/>
            <person name="Malfatti S."/>
            <person name="Loper J.E."/>
            <person name="Lapidus A."/>
            <person name="Detter J.C."/>
            <person name="Land M."/>
            <person name="Richardson P.M."/>
            <person name="Kyrpides N.C."/>
            <person name="Ivanova N."/>
            <person name="Lindow S.E."/>
        </authorList>
    </citation>
    <scope>NUCLEOTIDE SEQUENCE [LARGE SCALE GENOMIC DNA]</scope>
    <source>
        <strain>B728a</strain>
    </source>
</reference>
<organism>
    <name type="scientific">Pseudomonas syringae pv. syringae (strain B728a)</name>
    <dbReference type="NCBI Taxonomy" id="205918"/>
    <lineage>
        <taxon>Bacteria</taxon>
        <taxon>Pseudomonadati</taxon>
        <taxon>Pseudomonadota</taxon>
        <taxon>Gammaproteobacteria</taxon>
        <taxon>Pseudomonadales</taxon>
        <taxon>Pseudomonadaceae</taxon>
        <taxon>Pseudomonas</taxon>
        <taxon>Pseudomonas syringae</taxon>
    </lineage>
</organism>
<proteinExistence type="inferred from homology"/>